<sequence>MQAKTFLLGAALAGVALAAHAEDGTIVITGTITDQTCTIEDPSPGYIKVVHLPTISKSALKNAGDVAGRTRFDIKLKDCPTTVNTLKLYFEPGPTTDYGTKDLKAYKQAWYVDAATLLKSPPSVTEAKGVQIRLMNLNGKQIPMGETEPNQHAAAFSGTMQAGQAKKSFTLHYLAGYVKKASGEVEATMLTTYVGFSVVYP</sequence>
<keyword id="KW-1015">Disulfide bond</keyword>
<keyword id="KW-0281">Fimbrium</keyword>
<keyword id="KW-1185">Reference proteome</keyword>
<keyword id="KW-0732">Signal</keyword>
<reference key="1">
    <citation type="journal article" date="1988" name="Mol. Microbiol.">
        <title>Cloning of a novel pilin-like gene from Bordetella pertussis: homology to the fim2 gene.</title>
        <authorList>
            <person name="Pedroni P."/>
            <person name="Riboli B."/>
            <person name="de Ferra F."/>
            <person name="Grandi G."/>
            <person name="Toma S."/>
            <person name="Arico B."/>
            <person name="Rappuoli R."/>
        </authorList>
    </citation>
    <scope>NUCLEOTIDE SEQUENCE [GENOMIC DNA]</scope>
    <source>
        <strain>SA1</strain>
    </source>
</reference>
<reference key="2">
    <citation type="journal article" date="2003" name="Nat. Genet.">
        <title>Comparative analysis of the genome sequences of Bordetella pertussis, Bordetella parapertussis and Bordetella bronchiseptica.</title>
        <authorList>
            <person name="Parkhill J."/>
            <person name="Sebaihia M."/>
            <person name="Preston A."/>
            <person name="Murphy L.D."/>
            <person name="Thomson N.R."/>
            <person name="Harris D.E."/>
            <person name="Holden M.T.G."/>
            <person name="Churcher C.M."/>
            <person name="Bentley S.D."/>
            <person name="Mungall K.L."/>
            <person name="Cerdeno-Tarraga A.-M."/>
            <person name="Temple L."/>
            <person name="James K.D."/>
            <person name="Harris B."/>
            <person name="Quail M.A."/>
            <person name="Achtman M."/>
            <person name="Atkin R."/>
            <person name="Baker S."/>
            <person name="Basham D."/>
            <person name="Bason N."/>
            <person name="Cherevach I."/>
            <person name="Chillingworth T."/>
            <person name="Collins M."/>
            <person name="Cronin A."/>
            <person name="Davis P."/>
            <person name="Doggett J."/>
            <person name="Feltwell T."/>
            <person name="Goble A."/>
            <person name="Hamlin N."/>
            <person name="Hauser H."/>
            <person name="Holroyd S."/>
            <person name="Jagels K."/>
            <person name="Leather S."/>
            <person name="Moule S."/>
            <person name="Norberczak H."/>
            <person name="O'Neil S."/>
            <person name="Ormond D."/>
            <person name="Price C."/>
            <person name="Rabbinowitsch E."/>
            <person name="Rutter S."/>
            <person name="Sanders M."/>
            <person name="Saunders D."/>
            <person name="Seeger K."/>
            <person name="Sharp S."/>
            <person name="Simmonds M."/>
            <person name="Skelton J."/>
            <person name="Squares R."/>
            <person name="Squares S."/>
            <person name="Stevens K."/>
            <person name="Unwin L."/>
            <person name="Whitehead S."/>
            <person name="Barrell B.G."/>
            <person name="Maskell D.J."/>
        </authorList>
    </citation>
    <scope>NUCLEOTIDE SEQUENCE [LARGE SCALE GENOMIC DNA]</scope>
    <source>
        <strain>Tohama I / ATCC BAA-589 / NCTC 13251</strain>
    </source>
</reference>
<dbReference type="EMBL" id="Y00556">
    <property type="protein sequence ID" value="CAA68634.1"/>
    <property type="molecule type" value="Genomic_DNA"/>
</dbReference>
<dbReference type="EMBL" id="BX640419">
    <property type="protein sequence ID" value="CAE42950.1"/>
    <property type="molecule type" value="Genomic_DNA"/>
</dbReference>
<dbReference type="PIR" id="S01929">
    <property type="entry name" value="S01929"/>
</dbReference>
<dbReference type="RefSeq" id="NP_881287.1">
    <property type="nucleotide sequence ID" value="NC_002929.2"/>
</dbReference>
<dbReference type="RefSeq" id="WP_010931071.1">
    <property type="nucleotide sequence ID" value="NZ_CP039022.1"/>
</dbReference>
<dbReference type="SMR" id="P09808"/>
<dbReference type="STRING" id="257313.BP2674"/>
<dbReference type="PaxDb" id="257313-BP2674"/>
<dbReference type="GeneID" id="69602577"/>
<dbReference type="KEGG" id="bpe:BP2674"/>
<dbReference type="PATRIC" id="fig|257313.5.peg.2880"/>
<dbReference type="eggNOG" id="COG3539">
    <property type="taxonomic scope" value="Bacteria"/>
</dbReference>
<dbReference type="HOGENOM" id="CLU_088965_2_0_4"/>
<dbReference type="Proteomes" id="UP000002676">
    <property type="component" value="Chromosome"/>
</dbReference>
<dbReference type="GO" id="GO:0009289">
    <property type="term" value="C:pilus"/>
    <property type="evidence" value="ECO:0007669"/>
    <property type="project" value="UniProtKB-SubCell"/>
</dbReference>
<dbReference type="GO" id="GO:0043709">
    <property type="term" value="P:cell adhesion involved in single-species biofilm formation"/>
    <property type="evidence" value="ECO:0007669"/>
    <property type="project" value="TreeGrafter"/>
</dbReference>
<dbReference type="Gene3D" id="2.60.40.1090">
    <property type="entry name" value="Fimbrial-type adhesion domain"/>
    <property type="match status" value="1"/>
</dbReference>
<dbReference type="InterPro" id="IPR036937">
    <property type="entry name" value="Adhesion_dom_fimbrial_sf"/>
</dbReference>
<dbReference type="InterPro" id="IPR008966">
    <property type="entry name" value="Adhesion_dom_sf"/>
</dbReference>
<dbReference type="InterPro" id="IPR050263">
    <property type="entry name" value="Bact_Fimbrial_Adh_Pro"/>
</dbReference>
<dbReference type="InterPro" id="IPR039458">
    <property type="entry name" value="FimA-like"/>
</dbReference>
<dbReference type="PANTHER" id="PTHR33420:SF3">
    <property type="entry name" value="FIMBRIAL SUBUNIT ELFA"/>
    <property type="match status" value="1"/>
</dbReference>
<dbReference type="PANTHER" id="PTHR33420">
    <property type="entry name" value="FIMBRIAL SUBUNIT ELFA-RELATED"/>
    <property type="match status" value="1"/>
</dbReference>
<dbReference type="Pfam" id="PF16970">
    <property type="entry name" value="FimA"/>
    <property type="match status" value="1"/>
</dbReference>
<dbReference type="SUPFAM" id="SSF49401">
    <property type="entry name" value="Bacterial adhesins"/>
    <property type="match status" value="1"/>
</dbReference>
<proteinExistence type="inferred from homology"/>
<name>FMFX_BORPE</name>
<protein>
    <recommendedName>
        <fullName>Fimbrial protein FimX</fullName>
    </recommendedName>
    <alternativeName>
        <fullName>Pilin</fullName>
    </alternativeName>
</protein>
<comment type="function">
    <text>Bordetella pertussis is the causative agent of whooping cough. An essential step in the disease process is the attachment of the bacteria to the ciliated epithelium of the respiratory tract, enabling the organism to resist normal host-clearance mechanisms. It is unclear which bacterial cell surface component are responsible for adherence but the fimbriae of B.pertussis are prime candidates for being involved in this process.</text>
</comment>
<comment type="subcellular location">
    <subcellularLocation>
        <location>Fimbrium</location>
    </subcellularLocation>
    <text>Pili structure on the cell surface.</text>
</comment>
<comment type="similarity">
    <text evidence="1">Belongs to the fimbrial protein family.</text>
</comment>
<gene>
    <name type="primary">fimX</name>
    <name type="ordered locus">BP2674</name>
</gene>
<feature type="signal peptide">
    <location>
        <begin position="1"/>
        <end position="21"/>
    </location>
</feature>
<feature type="chain" id="PRO_0000009153" description="Fimbrial protein FimX">
    <location>
        <begin position="22"/>
        <end position="201"/>
    </location>
</feature>
<feature type="disulfide bond" evidence="1">
    <location>
        <begin position="37"/>
        <end position="79"/>
    </location>
</feature>
<feature type="sequence conflict" description="In Ref. 1; CAA68634." evidence="1" ref="1">
    <original>AK</original>
    <variation>GQ</variation>
    <location>
        <begin position="165"/>
        <end position="166"/>
    </location>
</feature>
<evidence type="ECO:0000305" key="1"/>
<accession>P09808</accession>
<organism>
    <name type="scientific">Bordetella pertussis (strain Tohama I / ATCC BAA-589 / NCTC 13251)</name>
    <dbReference type="NCBI Taxonomy" id="257313"/>
    <lineage>
        <taxon>Bacteria</taxon>
        <taxon>Pseudomonadati</taxon>
        <taxon>Pseudomonadota</taxon>
        <taxon>Betaproteobacteria</taxon>
        <taxon>Burkholderiales</taxon>
        <taxon>Alcaligenaceae</taxon>
        <taxon>Bordetella</taxon>
    </lineage>
</organism>